<proteinExistence type="inferred from homology"/>
<dbReference type="EC" id="3.6.1.15" evidence="1"/>
<dbReference type="EC" id="3.6.1.6" evidence="1"/>
<dbReference type="EMBL" id="AE016830">
    <property type="protein sequence ID" value="AAO80518.1"/>
    <property type="molecule type" value="Genomic_DNA"/>
</dbReference>
<dbReference type="RefSeq" id="NP_814448.1">
    <property type="nucleotide sequence ID" value="NC_004668.1"/>
</dbReference>
<dbReference type="SMR" id="Q837X8"/>
<dbReference type="STRING" id="226185.EF_0697"/>
<dbReference type="EnsemblBacteria" id="AAO80518">
    <property type="protein sequence ID" value="AAO80518"/>
    <property type="gene ID" value="EF_0697"/>
</dbReference>
<dbReference type="KEGG" id="efa:EF0697"/>
<dbReference type="PATRIC" id="fig|226185.45.peg.2639"/>
<dbReference type="eggNOG" id="COG3557">
    <property type="taxonomic scope" value="Bacteria"/>
</dbReference>
<dbReference type="HOGENOM" id="CLU_109787_1_0_9"/>
<dbReference type="Proteomes" id="UP000001415">
    <property type="component" value="Chromosome"/>
</dbReference>
<dbReference type="GO" id="GO:0000287">
    <property type="term" value="F:magnesium ion binding"/>
    <property type="evidence" value="ECO:0007669"/>
    <property type="project" value="UniProtKB-UniRule"/>
</dbReference>
<dbReference type="GO" id="GO:0017110">
    <property type="term" value="F:nucleoside diphosphate phosphatase activity"/>
    <property type="evidence" value="ECO:0007669"/>
    <property type="project" value="UniProtKB-UniRule"/>
</dbReference>
<dbReference type="GO" id="GO:0017111">
    <property type="term" value="F:ribonucleoside triphosphate phosphatase activity"/>
    <property type="evidence" value="ECO:0007669"/>
    <property type="project" value="UniProtKB-UniRule"/>
</dbReference>
<dbReference type="Gene3D" id="2.40.380.10">
    <property type="entry name" value="FomD-like"/>
    <property type="match status" value="1"/>
</dbReference>
<dbReference type="HAMAP" id="MF_01568">
    <property type="entry name" value="Ntdp"/>
    <property type="match status" value="1"/>
</dbReference>
<dbReference type="InterPro" id="IPR007295">
    <property type="entry name" value="DUF402"/>
</dbReference>
<dbReference type="InterPro" id="IPR035930">
    <property type="entry name" value="FomD-like_sf"/>
</dbReference>
<dbReference type="InterPro" id="IPR050212">
    <property type="entry name" value="Ntdp-like"/>
</dbReference>
<dbReference type="InterPro" id="IPR016882">
    <property type="entry name" value="SA1684"/>
</dbReference>
<dbReference type="NCBIfam" id="NF010183">
    <property type="entry name" value="PRK13662.1"/>
    <property type="match status" value="1"/>
</dbReference>
<dbReference type="PANTHER" id="PTHR39159">
    <property type="match status" value="1"/>
</dbReference>
<dbReference type="PANTHER" id="PTHR39159:SF1">
    <property type="entry name" value="UPF0374 PROTEIN YGAC"/>
    <property type="match status" value="1"/>
</dbReference>
<dbReference type="Pfam" id="PF04167">
    <property type="entry name" value="DUF402"/>
    <property type="match status" value="1"/>
</dbReference>
<dbReference type="PIRSF" id="PIRSF028345">
    <property type="entry name" value="UCP028345"/>
    <property type="match status" value="1"/>
</dbReference>
<dbReference type="SUPFAM" id="SSF159234">
    <property type="entry name" value="FomD-like"/>
    <property type="match status" value="1"/>
</dbReference>
<gene>
    <name type="ordered locus">EF_0697</name>
</gene>
<evidence type="ECO:0000255" key="1">
    <source>
        <dbReference type="HAMAP-Rule" id="MF_01568"/>
    </source>
</evidence>
<name>NTDP_ENTFA</name>
<accession>Q837X8</accession>
<feature type="chain" id="PRO_0000248093" description="Nucleoside triphosphate/diphosphate phosphatase">
    <location>
        <begin position="1"/>
        <end position="177"/>
    </location>
</feature>
<feature type="active site" description="Proton donor" evidence="1">
    <location>
        <position position="23"/>
    </location>
</feature>
<feature type="binding site" evidence="1">
    <location>
        <position position="87"/>
    </location>
    <ligand>
        <name>Mg(2+)</name>
        <dbReference type="ChEBI" id="CHEBI:18420"/>
        <label>1</label>
    </ligand>
</feature>
<feature type="binding site" evidence="1">
    <location>
        <position position="103"/>
    </location>
    <ligand>
        <name>Mg(2+)</name>
        <dbReference type="ChEBI" id="CHEBI:18420"/>
        <label>1</label>
    </ligand>
</feature>
<feature type="binding site" evidence="1">
    <location>
        <position position="105"/>
    </location>
    <ligand>
        <name>Mg(2+)</name>
        <dbReference type="ChEBI" id="CHEBI:18420"/>
        <label>2</label>
    </ligand>
</feature>
<feature type="binding site" evidence="1">
    <location>
        <position position="107"/>
    </location>
    <ligand>
        <name>Mg(2+)</name>
        <dbReference type="ChEBI" id="CHEBI:18420"/>
        <label>1</label>
    </ligand>
</feature>
<feature type="binding site" evidence="1">
    <location>
        <position position="107"/>
    </location>
    <ligand>
        <name>Mg(2+)</name>
        <dbReference type="ChEBI" id="CHEBI:18420"/>
        <label>2</label>
    </ligand>
</feature>
<feature type="binding site" evidence="1">
    <location>
        <position position="120"/>
    </location>
    <ligand>
        <name>Mg(2+)</name>
        <dbReference type="ChEBI" id="CHEBI:18420"/>
        <label>2</label>
    </ligand>
</feature>
<feature type="binding site" evidence="1">
    <location>
        <position position="123"/>
    </location>
    <ligand>
        <name>Mg(2+)</name>
        <dbReference type="ChEBI" id="CHEBI:18420"/>
        <label>2</label>
    </ligand>
</feature>
<reference key="1">
    <citation type="journal article" date="2003" name="Science">
        <title>Role of mobile DNA in the evolution of vancomycin-resistant Enterococcus faecalis.</title>
        <authorList>
            <person name="Paulsen I.T."/>
            <person name="Banerjei L."/>
            <person name="Myers G.S.A."/>
            <person name="Nelson K.E."/>
            <person name="Seshadri R."/>
            <person name="Read T.D."/>
            <person name="Fouts D.E."/>
            <person name="Eisen J.A."/>
            <person name="Gill S.R."/>
            <person name="Heidelberg J.F."/>
            <person name="Tettelin H."/>
            <person name="Dodson R.J."/>
            <person name="Umayam L.A."/>
            <person name="Brinkac L.M."/>
            <person name="Beanan M.J."/>
            <person name="Daugherty S.C."/>
            <person name="DeBoy R.T."/>
            <person name="Durkin S.A."/>
            <person name="Kolonay J.F."/>
            <person name="Madupu R."/>
            <person name="Nelson W.C."/>
            <person name="Vamathevan J.J."/>
            <person name="Tran B."/>
            <person name="Upton J."/>
            <person name="Hansen T."/>
            <person name="Shetty J."/>
            <person name="Khouri H.M."/>
            <person name="Utterback T.R."/>
            <person name="Radune D."/>
            <person name="Ketchum K.A."/>
            <person name="Dougherty B.A."/>
            <person name="Fraser C.M."/>
        </authorList>
    </citation>
    <scope>NUCLEOTIDE SEQUENCE [LARGE SCALE GENOMIC DNA]</scope>
    <source>
        <strain>ATCC 700802 / V583</strain>
    </source>
</reference>
<keyword id="KW-0378">Hydrolase</keyword>
<keyword id="KW-0460">Magnesium</keyword>
<keyword id="KW-0479">Metal-binding</keyword>
<keyword id="KW-1185">Reference proteome</keyword>
<protein>
    <recommendedName>
        <fullName evidence="1">Nucleoside triphosphate/diphosphate phosphatase</fullName>
        <ecNumber evidence="1">3.6.1.15</ecNumber>
        <ecNumber evidence="1">3.6.1.6</ecNumber>
    </recommendedName>
</protein>
<organism>
    <name type="scientific">Enterococcus faecalis (strain ATCC 700802 / V583)</name>
    <dbReference type="NCBI Taxonomy" id="226185"/>
    <lineage>
        <taxon>Bacteria</taxon>
        <taxon>Bacillati</taxon>
        <taxon>Bacillota</taxon>
        <taxon>Bacilli</taxon>
        <taxon>Lactobacillales</taxon>
        <taxon>Enterococcaceae</taxon>
        <taxon>Enterococcus</taxon>
    </lineage>
</organism>
<comment type="function">
    <text evidence="1">Has nucleoside phosphatase activity towards nucleoside triphosphates and nucleoside diphosphates.</text>
</comment>
<comment type="catalytic activity">
    <reaction evidence="1">
        <text>a ribonucleoside 5'-triphosphate + H2O = a ribonucleoside 5'-diphosphate + phosphate + H(+)</text>
        <dbReference type="Rhea" id="RHEA:23680"/>
        <dbReference type="ChEBI" id="CHEBI:15377"/>
        <dbReference type="ChEBI" id="CHEBI:15378"/>
        <dbReference type="ChEBI" id="CHEBI:43474"/>
        <dbReference type="ChEBI" id="CHEBI:57930"/>
        <dbReference type="ChEBI" id="CHEBI:61557"/>
        <dbReference type="EC" id="3.6.1.15"/>
    </reaction>
</comment>
<comment type="catalytic activity">
    <reaction evidence="1">
        <text>a ribonucleoside 5'-diphosphate + H2O = a ribonucleoside 5'-phosphate + phosphate + H(+)</text>
        <dbReference type="Rhea" id="RHEA:36799"/>
        <dbReference type="ChEBI" id="CHEBI:15377"/>
        <dbReference type="ChEBI" id="CHEBI:15378"/>
        <dbReference type="ChEBI" id="CHEBI:43474"/>
        <dbReference type="ChEBI" id="CHEBI:57930"/>
        <dbReference type="ChEBI" id="CHEBI:58043"/>
        <dbReference type="EC" id="3.6.1.6"/>
    </reaction>
</comment>
<comment type="cofactor">
    <cofactor evidence="1">
        <name>Mg(2+)</name>
        <dbReference type="ChEBI" id="CHEBI:18420"/>
    </cofactor>
</comment>
<comment type="similarity">
    <text evidence="1">Belongs to the Ntdp family.</text>
</comment>
<sequence length="177" mass="21205">MGIPKEGEFVTIQSYKHDGHLHRTWRDTMVLKTSEYSLIGVNDHTLVTESDGRRWVTREPAIVYFHKKYWFNIIAMIREKGVSYYCNLASPYVLDDEALKYIDYDLDIKVFPDGEKRLLDVDEYEFHSKLMDYPEDIDFILKENVKTLVDWINNEKGPFSPEYVDIWYQRYQQLSKK</sequence>